<feature type="chain" id="PRO_0000107904" description="Arylamine N-acetyltransferase 1">
    <location>
        <begin position="1"/>
        <end position="290"/>
    </location>
</feature>
<feature type="active site" description="Acyl-thioester intermediate">
    <location>
        <position position="68"/>
    </location>
</feature>
<feature type="active site">
    <location>
        <position position="107"/>
    </location>
</feature>
<feature type="active site">
    <location>
        <position position="122"/>
    </location>
</feature>
<feature type="binding site" evidence="1">
    <location>
        <position position="103"/>
    </location>
    <ligand>
        <name>CoA</name>
        <dbReference type="ChEBI" id="CHEBI:57287"/>
    </ligand>
</feature>
<feature type="binding site" evidence="1">
    <location>
        <position position="104"/>
    </location>
    <ligand>
        <name>CoA</name>
        <dbReference type="ChEBI" id="CHEBI:57287"/>
    </ligand>
</feature>
<feature type="binding site">
    <location>
        <begin position="106"/>
        <end position="107"/>
    </location>
    <ligand>
        <name>substrate</name>
    </ligand>
</feature>
<feature type="binding site" evidence="1">
    <location>
        <position position="208"/>
    </location>
    <ligand>
        <name>CoA</name>
        <dbReference type="ChEBI" id="CHEBI:57287"/>
    </ligand>
</feature>
<feature type="binding site" evidence="1">
    <location>
        <position position="214"/>
    </location>
    <ligand>
        <name>CoA</name>
        <dbReference type="ChEBI" id="CHEBI:57287"/>
    </ligand>
</feature>
<feature type="modified residue" description="N-acetylmethionine" evidence="13">
    <location>
        <position position="1"/>
    </location>
</feature>
<feature type="sequence variant" id="VAR_004606" description="In allele NAT1*17; a slow acetylator; has defective enzyme activity; dbSNP:rs56379106." evidence="9">
    <original>R</original>
    <variation>W</variation>
    <location>
        <position position="64"/>
    </location>
</feature>
<feature type="sequence variant" id="VAR_009510" description="In allele NAT1*5; dbSNP:rs55641436." evidence="3">
    <original>R</original>
    <variation>T</variation>
    <location>
        <position position="117"/>
    </location>
</feature>
<feature type="sequence variant" id="VAR_004607" description="In allele NAT1*11; catalyzes the N-acetylation of aromatic amines and the O- and N,O-acetylation of their N-hydroxylated metabolites at rates up to 2-fold higher; dbSNP:rs4987076." evidence="2 5 6 10 11">
    <original>V</original>
    <variation>I</variation>
    <location>
        <position position="149"/>
    </location>
</feature>
<feature type="sequence variant" id="VAR_009511" description="In allele NAT1*5; dbSNP:rs72554608." evidence="3">
    <original>RE</original>
    <variation>TQ</variation>
    <location>
        <begin position="166"/>
        <end position="167"/>
    </location>
</feature>
<feature type="sequence variant" id="VAR_009069" description="In allele NAT1*14; a slow acetylator; dbSNP:rs4986782." evidence="8 9">
    <original>R</original>
    <variation>Q</variation>
    <location>
        <position position="187"/>
    </location>
</feature>
<feature type="sequence variant" id="VAR_009070" description="In allele NAT1*21; dbSNP:rs72554609.">
    <original>M</original>
    <variation>V</variation>
    <location>
        <position position="205"/>
    </location>
</feature>
<feature type="sequence variant" id="VAR_020384" description="In dbSNP:rs4987195.">
    <original>T</original>
    <variation>I</variation>
    <location>
        <position position="207"/>
    </location>
</feature>
<feature type="sequence variant" id="VAR_009071" description="In allele NAT1*11; dbSNP:rs4986783." evidence="2 5 6 10 11">
    <original>S</original>
    <variation>A</variation>
    <location>
        <position position="214"/>
    </location>
</feature>
<feature type="sequence variant" id="VAR_009072" description="In allele NAT1*22; dbSNP:rs56172717.">
    <original>D</original>
    <variation>V</variation>
    <location>
        <position position="251"/>
    </location>
</feature>
<feature type="sequence variant" id="VAR_009073" description="In allele NAT1*24; dbSNP:rs72554610.">
    <original>E</original>
    <variation>K</variation>
    <location>
        <position position="261"/>
    </location>
</feature>
<feature type="sequence variant" id="VAR_009074" description="In allele NAT1*25; dbSNP:rs72554611.">
    <original>I</original>
    <variation>V</variation>
    <location>
        <position position="263"/>
    </location>
</feature>
<feature type="mutagenesis site" description="Reduced enzymatic activity." evidence="7">
    <original>R</original>
    <variation>A</variation>
    <variation>M</variation>
    <variation>Q</variation>
    <variation>K</variation>
    <location>
        <position position="64"/>
    </location>
</feature>
<feature type="helix" evidence="14">
    <location>
        <begin position="2"/>
        <end position="9"/>
    </location>
</feature>
<feature type="helix" evidence="14">
    <location>
        <begin position="21"/>
        <end position="34"/>
    </location>
</feature>
<feature type="helix" evidence="14">
    <location>
        <begin position="42"/>
        <end position="44"/>
    </location>
</feature>
<feature type="helix" evidence="14">
    <location>
        <begin position="52"/>
        <end position="60"/>
    </location>
</feature>
<feature type="helix" evidence="14">
    <location>
        <begin position="68"/>
        <end position="82"/>
    </location>
</feature>
<feature type="strand" evidence="14">
    <location>
        <begin position="85"/>
        <end position="95"/>
    </location>
</feature>
<feature type="turn" evidence="14">
    <location>
        <begin position="96"/>
        <end position="99"/>
    </location>
</feature>
<feature type="strand" evidence="14">
    <location>
        <begin position="107"/>
        <end position="114"/>
    </location>
</feature>
<feature type="strand" evidence="14">
    <location>
        <begin position="117"/>
        <end position="121"/>
    </location>
</feature>
<feature type="strand" evidence="15">
    <location>
        <begin position="123"/>
        <end position="125"/>
    </location>
</feature>
<feature type="helix" evidence="14">
    <location>
        <begin position="127"/>
        <end position="129"/>
    </location>
</feature>
<feature type="strand" evidence="14">
    <location>
        <begin position="142"/>
        <end position="144"/>
    </location>
</feature>
<feature type="strand" evidence="14">
    <location>
        <begin position="149"/>
        <end position="155"/>
    </location>
</feature>
<feature type="strand" evidence="14">
    <location>
        <begin position="158"/>
        <end position="164"/>
    </location>
</feature>
<feature type="strand" evidence="14">
    <location>
        <begin position="167"/>
        <end position="169"/>
    </location>
</feature>
<feature type="helix" evidence="14">
    <location>
        <begin position="173"/>
        <end position="175"/>
    </location>
</feature>
<feature type="strand" evidence="14">
    <location>
        <begin position="185"/>
        <end position="192"/>
    </location>
</feature>
<feature type="helix" evidence="14">
    <location>
        <begin position="199"/>
        <end position="202"/>
    </location>
</feature>
<feature type="helix" evidence="14">
    <location>
        <begin position="203"/>
        <end position="211"/>
    </location>
</feature>
<feature type="helix" evidence="14">
    <location>
        <begin position="216"/>
        <end position="219"/>
    </location>
</feature>
<feature type="strand" evidence="14">
    <location>
        <begin position="222"/>
        <end position="226"/>
    </location>
</feature>
<feature type="strand" evidence="14">
    <location>
        <begin position="228"/>
        <end position="235"/>
    </location>
</feature>
<feature type="strand" evidence="14">
    <location>
        <begin position="238"/>
        <end position="243"/>
    </location>
</feature>
<feature type="strand" evidence="14">
    <location>
        <begin position="247"/>
        <end position="257"/>
    </location>
</feature>
<feature type="helix" evidence="14">
    <location>
        <begin position="260"/>
        <end position="271"/>
    </location>
</feature>
<sequence length="290" mass="33899">MDIEAYLERIGYKKSRNKLDLETLTDILQHQIRAVPFENLNIHCGDAMDLGLEAIFDQVVRRNRGGWCLQVNHLLYWALTTIGFETTMLGGYVYSTPAKKYSTGMIHLLLQVTIDGRNYIVDAGFGRSYQMWQPLELISGKDQPQVPCVFRLTEENGFWYLDQIRREQYIPNEEFLHSDLLEDSKYRKIYSFTLKPRTIEDFESMNTYLQTSPSSVFTSKSFCSLQTPDGVHCLVGFTLTHRRFNYKDNTDLIEFKTLSEEEIEKVLKNIFNISLQRKLVPKHGDRFFTI</sequence>
<keyword id="KW-0002">3D-structure</keyword>
<keyword id="KW-0007">Acetylation</keyword>
<keyword id="KW-0012">Acyltransferase</keyword>
<keyword id="KW-0963">Cytoplasm</keyword>
<keyword id="KW-1267">Proteomics identification</keyword>
<keyword id="KW-1185">Reference proteome</keyword>
<keyword id="KW-0808">Transferase</keyword>
<accession>P18440</accession>
<accession>A8K4E7</accession>
<accession>O15159</accession>
<accession>O15300</accession>
<accession>Q546N1</accession>
<accession>Q96TE9</accession>
<proteinExistence type="evidence at protein level"/>
<dbReference type="EC" id="2.3.1.5"/>
<dbReference type="EMBL" id="X17059">
    <property type="protein sequence ID" value="CAA34905.1"/>
    <property type="molecule type" value="Genomic_DNA"/>
</dbReference>
<dbReference type="EMBL" id="D90041">
    <property type="protein sequence ID" value="BAA14095.1"/>
    <property type="molecule type" value="mRNA"/>
</dbReference>
<dbReference type="EMBL" id="AF032677">
    <property type="protein sequence ID" value="AAB86878.1"/>
    <property type="molecule type" value="Genomic_DNA"/>
</dbReference>
<dbReference type="EMBL" id="AF032678">
    <property type="protein sequence ID" value="AAB86879.1"/>
    <property type="molecule type" value="Genomic_DNA"/>
</dbReference>
<dbReference type="EMBL" id="U80835">
    <property type="protein sequence ID" value="AAB62398.1"/>
    <property type="molecule type" value="Genomic_DNA"/>
</dbReference>
<dbReference type="EMBL" id="AF008204">
    <property type="protein sequence ID" value="AAB84384.1"/>
    <property type="molecule type" value="Genomic_DNA"/>
</dbReference>
<dbReference type="EMBL" id="AF071552">
    <property type="protein sequence ID" value="AAC24712.1"/>
    <property type="molecule type" value="Genomic_DNA"/>
</dbReference>
<dbReference type="EMBL" id="AF067408">
    <property type="protein sequence ID" value="AAC24707.1"/>
    <property type="molecule type" value="Genomic_DNA"/>
</dbReference>
<dbReference type="EMBL" id="AF082903">
    <property type="protein sequence ID" value="AAD13343.1"/>
    <property type="molecule type" value="Genomic_DNA"/>
</dbReference>
<dbReference type="EMBL" id="AF082904">
    <property type="protein sequence ID" value="AAC32388.1"/>
    <property type="molecule type" value="Genomic_DNA"/>
</dbReference>
<dbReference type="EMBL" id="AJ278017">
    <property type="protein sequence ID" value="CAC01128.1"/>
    <property type="molecule type" value="Genomic_DNA"/>
</dbReference>
<dbReference type="EMBL" id="AJ307007">
    <property type="protein sequence ID" value="CAC38345.1"/>
    <property type="molecule type" value="Genomic_DNA"/>
</dbReference>
<dbReference type="EMBL" id="DQ305816">
    <property type="protein sequence ID" value="ABC26192.1"/>
    <property type="molecule type" value="Genomic_DNA"/>
</dbReference>
<dbReference type="EMBL" id="DQ305817">
    <property type="protein sequence ID" value="ABC26193.1"/>
    <property type="molecule type" value="Genomic_DNA"/>
</dbReference>
<dbReference type="EMBL" id="DQ305818">
    <property type="protein sequence ID" value="ABC26194.1"/>
    <property type="molecule type" value="Genomic_DNA"/>
</dbReference>
<dbReference type="EMBL" id="DQ305819">
    <property type="protein sequence ID" value="ABC26195.1"/>
    <property type="molecule type" value="Genomic_DNA"/>
</dbReference>
<dbReference type="EMBL" id="DQ305820">
    <property type="protein sequence ID" value="ABC26196.1"/>
    <property type="molecule type" value="Genomic_DNA"/>
</dbReference>
<dbReference type="EMBL" id="DQ305821">
    <property type="protein sequence ID" value="ABC26197.1"/>
    <property type="molecule type" value="Genomic_DNA"/>
</dbReference>
<dbReference type="EMBL" id="DQ305822">
    <property type="protein sequence ID" value="ABC26198.1"/>
    <property type="molecule type" value="Genomic_DNA"/>
</dbReference>
<dbReference type="EMBL" id="DQ305823">
    <property type="protein sequence ID" value="ABC26199.1"/>
    <property type="molecule type" value="Genomic_DNA"/>
</dbReference>
<dbReference type="EMBL" id="DQ305824">
    <property type="protein sequence ID" value="ABC26200.1"/>
    <property type="molecule type" value="Genomic_DNA"/>
</dbReference>
<dbReference type="EMBL" id="DQ305825">
    <property type="protein sequence ID" value="ABC26201.1"/>
    <property type="molecule type" value="Genomic_DNA"/>
</dbReference>
<dbReference type="EMBL" id="DQ305826">
    <property type="protein sequence ID" value="ABC26202.1"/>
    <property type="molecule type" value="Genomic_DNA"/>
</dbReference>
<dbReference type="EMBL" id="DQ305827">
    <property type="protein sequence ID" value="ABC26203.1"/>
    <property type="molecule type" value="Genomic_DNA"/>
</dbReference>
<dbReference type="EMBL" id="DQ305828">
    <property type="protein sequence ID" value="ABC26204.1"/>
    <property type="molecule type" value="Genomic_DNA"/>
</dbReference>
<dbReference type="EMBL" id="DQ305829">
    <property type="protein sequence ID" value="ABC26205.1"/>
    <property type="molecule type" value="Genomic_DNA"/>
</dbReference>
<dbReference type="EMBL" id="DQ305830">
    <property type="protein sequence ID" value="ABC26206.1"/>
    <property type="molecule type" value="Genomic_DNA"/>
</dbReference>
<dbReference type="EMBL" id="DQ305831">
    <property type="protein sequence ID" value="ABC26207.1"/>
    <property type="molecule type" value="Genomic_DNA"/>
</dbReference>
<dbReference type="EMBL" id="DQ305832">
    <property type="protein sequence ID" value="ABC26208.1"/>
    <property type="molecule type" value="Genomic_DNA"/>
</dbReference>
<dbReference type="EMBL" id="DQ305833">
    <property type="protein sequence ID" value="ABC26209.1"/>
    <property type="molecule type" value="Genomic_DNA"/>
</dbReference>
<dbReference type="EMBL" id="DQ305834">
    <property type="protein sequence ID" value="ABC26210.1"/>
    <property type="molecule type" value="Genomic_DNA"/>
</dbReference>
<dbReference type="EMBL" id="DQ305835">
    <property type="protein sequence ID" value="ABC26211.1"/>
    <property type="molecule type" value="Genomic_DNA"/>
</dbReference>
<dbReference type="EMBL" id="DQ305836">
    <property type="protein sequence ID" value="ABC26212.1"/>
    <property type="molecule type" value="Genomic_DNA"/>
</dbReference>
<dbReference type="EMBL" id="DQ305837">
    <property type="protein sequence ID" value="ABC26213.1"/>
    <property type="molecule type" value="Genomic_DNA"/>
</dbReference>
<dbReference type="EMBL" id="DQ305838">
    <property type="protein sequence ID" value="ABC26214.1"/>
    <property type="molecule type" value="Genomic_DNA"/>
</dbReference>
<dbReference type="EMBL" id="DQ305839">
    <property type="protein sequence ID" value="ABC26215.1"/>
    <property type="molecule type" value="Genomic_DNA"/>
</dbReference>
<dbReference type="EMBL" id="DQ305840">
    <property type="protein sequence ID" value="ABC26216.1"/>
    <property type="molecule type" value="Genomic_DNA"/>
</dbReference>
<dbReference type="EMBL" id="DQ305841">
    <property type="protein sequence ID" value="ABC26217.1"/>
    <property type="molecule type" value="Genomic_DNA"/>
</dbReference>
<dbReference type="EMBL" id="DQ305842">
    <property type="protein sequence ID" value="ABC26218.1"/>
    <property type="molecule type" value="Genomic_DNA"/>
</dbReference>
<dbReference type="EMBL" id="DQ305843">
    <property type="protein sequence ID" value="ABC26219.1"/>
    <property type="molecule type" value="Genomic_DNA"/>
</dbReference>
<dbReference type="EMBL" id="DQ305844">
    <property type="protein sequence ID" value="ABC26220.1"/>
    <property type="molecule type" value="Genomic_DNA"/>
</dbReference>
<dbReference type="EMBL" id="DQ305845">
    <property type="protein sequence ID" value="ABC26221.1"/>
    <property type="molecule type" value="Genomic_DNA"/>
</dbReference>
<dbReference type="EMBL" id="DQ305846">
    <property type="protein sequence ID" value="ABC26222.1"/>
    <property type="molecule type" value="Genomic_DNA"/>
</dbReference>
<dbReference type="EMBL" id="DQ305847">
    <property type="protein sequence ID" value="ABC26223.1"/>
    <property type="molecule type" value="Genomic_DNA"/>
</dbReference>
<dbReference type="EMBL" id="DQ305848">
    <property type="protein sequence ID" value="ABC26224.1"/>
    <property type="molecule type" value="Genomic_DNA"/>
</dbReference>
<dbReference type="EMBL" id="DQ305849">
    <property type="protein sequence ID" value="ABC26225.1"/>
    <property type="molecule type" value="Genomic_DNA"/>
</dbReference>
<dbReference type="EMBL" id="DQ305850">
    <property type="protein sequence ID" value="ABC26226.1"/>
    <property type="molecule type" value="Genomic_DNA"/>
</dbReference>
<dbReference type="EMBL" id="DQ305851">
    <property type="protein sequence ID" value="ABC26227.1"/>
    <property type="molecule type" value="Genomic_DNA"/>
</dbReference>
<dbReference type="EMBL" id="DQ305852">
    <property type="protein sequence ID" value="ABC26228.1"/>
    <property type="molecule type" value="Genomic_DNA"/>
</dbReference>
<dbReference type="EMBL" id="DQ305853">
    <property type="protein sequence ID" value="ABC26229.1"/>
    <property type="molecule type" value="Genomic_DNA"/>
</dbReference>
<dbReference type="EMBL" id="DQ305854">
    <property type="protein sequence ID" value="ABC26230.1"/>
    <property type="molecule type" value="Genomic_DNA"/>
</dbReference>
<dbReference type="EMBL" id="DQ305855">
    <property type="protein sequence ID" value="ABC26231.1"/>
    <property type="molecule type" value="Genomic_DNA"/>
</dbReference>
<dbReference type="EMBL" id="DQ305856">
    <property type="protein sequence ID" value="ABC26232.1"/>
    <property type="molecule type" value="Genomic_DNA"/>
</dbReference>
<dbReference type="EMBL" id="DQ305857">
    <property type="protein sequence ID" value="ABC26233.1"/>
    <property type="molecule type" value="Genomic_DNA"/>
</dbReference>
<dbReference type="EMBL" id="DQ305858">
    <property type="protein sequence ID" value="ABC26234.1"/>
    <property type="molecule type" value="Genomic_DNA"/>
</dbReference>
<dbReference type="EMBL" id="DQ305859">
    <property type="protein sequence ID" value="ABC26235.1"/>
    <property type="molecule type" value="Genomic_DNA"/>
</dbReference>
<dbReference type="EMBL" id="DQ305860">
    <property type="protein sequence ID" value="ABC26236.1"/>
    <property type="molecule type" value="Genomic_DNA"/>
</dbReference>
<dbReference type="EMBL" id="DQ305861">
    <property type="protein sequence ID" value="ABC26237.1"/>
    <property type="molecule type" value="Genomic_DNA"/>
</dbReference>
<dbReference type="EMBL" id="DQ305862">
    <property type="protein sequence ID" value="ABC26238.1"/>
    <property type="molecule type" value="Genomic_DNA"/>
</dbReference>
<dbReference type="EMBL" id="DQ305863">
    <property type="protein sequence ID" value="ABC26239.1"/>
    <property type="molecule type" value="Genomic_DNA"/>
</dbReference>
<dbReference type="EMBL" id="DQ305864">
    <property type="protein sequence ID" value="ABC26240.1"/>
    <property type="molecule type" value="Genomic_DNA"/>
</dbReference>
<dbReference type="EMBL" id="DQ305865">
    <property type="protein sequence ID" value="ABC26241.1"/>
    <property type="molecule type" value="Genomic_DNA"/>
</dbReference>
<dbReference type="EMBL" id="DQ305866">
    <property type="protein sequence ID" value="ABC26242.1"/>
    <property type="molecule type" value="Genomic_DNA"/>
</dbReference>
<dbReference type="EMBL" id="DQ305867">
    <property type="protein sequence ID" value="ABC26243.1"/>
    <property type="molecule type" value="Genomic_DNA"/>
</dbReference>
<dbReference type="EMBL" id="DQ305868">
    <property type="protein sequence ID" value="ABC26244.1"/>
    <property type="molecule type" value="Genomic_DNA"/>
</dbReference>
<dbReference type="EMBL" id="DQ305869">
    <property type="protein sequence ID" value="ABC26245.1"/>
    <property type="molecule type" value="Genomic_DNA"/>
</dbReference>
<dbReference type="EMBL" id="DQ305870">
    <property type="protein sequence ID" value="ABC26246.1"/>
    <property type="molecule type" value="Genomic_DNA"/>
</dbReference>
<dbReference type="EMBL" id="DQ305871">
    <property type="protein sequence ID" value="ABC26247.1"/>
    <property type="molecule type" value="Genomic_DNA"/>
</dbReference>
<dbReference type="EMBL" id="DQ305872">
    <property type="protein sequence ID" value="ABC26248.1"/>
    <property type="molecule type" value="Genomic_DNA"/>
</dbReference>
<dbReference type="EMBL" id="DQ305873">
    <property type="protein sequence ID" value="ABC26249.1"/>
    <property type="molecule type" value="Genomic_DNA"/>
</dbReference>
<dbReference type="EMBL" id="DQ305874">
    <property type="protein sequence ID" value="ABC26250.1"/>
    <property type="molecule type" value="Genomic_DNA"/>
</dbReference>
<dbReference type="EMBL" id="DQ305875">
    <property type="protein sequence ID" value="ABC26251.1"/>
    <property type="molecule type" value="Genomic_DNA"/>
</dbReference>
<dbReference type="EMBL" id="DQ305876">
    <property type="protein sequence ID" value="ABC26252.1"/>
    <property type="molecule type" value="Genomic_DNA"/>
</dbReference>
<dbReference type="EMBL" id="DQ305877">
    <property type="protein sequence ID" value="ABC26253.1"/>
    <property type="molecule type" value="Genomic_DNA"/>
</dbReference>
<dbReference type="EMBL" id="DQ305878">
    <property type="protein sequence ID" value="ABC26254.1"/>
    <property type="molecule type" value="Genomic_DNA"/>
</dbReference>
<dbReference type="EMBL" id="DQ305879">
    <property type="protein sequence ID" value="ABC26255.1"/>
    <property type="molecule type" value="Genomic_DNA"/>
</dbReference>
<dbReference type="EMBL" id="DQ305880">
    <property type="protein sequence ID" value="ABC26256.1"/>
    <property type="molecule type" value="Genomic_DNA"/>
</dbReference>
<dbReference type="EMBL" id="DQ305881">
    <property type="protein sequence ID" value="ABC26257.1"/>
    <property type="molecule type" value="Genomic_DNA"/>
</dbReference>
<dbReference type="EMBL" id="DQ305882">
    <property type="protein sequence ID" value="ABC26258.1"/>
    <property type="molecule type" value="Genomic_DNA"/>
</dbReference>
<dbReference type="EMBL" id="DQ305883">
    <property type="protein sequence ID" value="ABC26259.1"/>
    <property type="molecule type" value="Genomic_DNA"/>
</dbReference>
<dbReference type="EMBL" id="DQ305884">
    <property type="protein sequence ID" value="ABC26260.1"/>
    <property type="molecule type" value="Genomic_DNA"/>
</dbReference>
<dbReference type="EMBL" id="DQ305885">
    <property type="protein sequence ID" value="ABC26261.1"/>
    <property type="molecule type" value="Genomic_DNA"/>
</dbReference>
<dbReference type="EMBL" id="DQ305886">
    <property type="protein sequence ID" value="ABC26262.1"/>
    <property type="molecule type" value="Genomic_DNA"/>
</dbReference>
<dbReference type="EMBL" id="DQ305887">
    <property type="protein sequence ID" value="ABC26263.1"/>
    <property type="molecule type" value="Genomic_DNA"/>
</dbReference>
<dbReference type="EMBL" id="DQ305888">
    <property type="protein sequence ID" value="ABC26264.1"/>
    <property type="molecule type" value="Genomic_DNA"/>
</dbReference>
<dbReference type="EMBL" id="DQ305889">
    <property type="protein sequence ID" value="ABC26265.1"/>
    <property type="molecule type" value="Genomic_DNA"/>
</dbReference>
<dbReference type="EMBL" id="DQ305890">
    <property type="protein sequence ID" value="ABC26266.1"/>
    <property type="molecule type" value="Genomic_DNA"/>
</dbReference>
<dbReference type="EMBL" id="DQ305891">
    <property type="protein sequence ID" value="ABC26267.1"/>
    <property type="molecule type" value="Genomic_DNA"/>
</dbReference>
<dbReference type="EMBL" id="DQ305892">
    <property type="protein sequence ID" value="ABC26268.1"/>
    <property type="molecule type" value="Genomic_DNA"/>
</dbReference>
<dbReference type="EMBL" id="DQ305893">
    <property type="protein sequence ID" value="ABC26269.1"/>
    <property type="molecule type" value="Genomic_DNA"/>
</dbReference>
<dbReference type="EMBL" id="DQ305894">
    <property type="protein sequence ID" value="ABC26270.1"/>
    <property type="molecule type" value="Genomic_DNA"/>
</dbReference>
<dbReference type="EMBL" id="DQ305895">
    <property type="protein sequence ID" value="ABC26271.1"/>
    <property type="molecule type" value="Genomic_DNA"/>
</dbReference>
<dbReference type="EMBL" id="DQ305896">
    <property type="protein sequence ID" value="ABC26272.1"/>
    <property type="molecule type" value="Genomic_DNA"/>
</dbReference>
<dbReference type="EMBL" id="DQ305897">
    <property type="protein sequence ID" value="ABC26273.1"/>
    <property type="molecule type" value="Genomic_DNA"/>
</dbReference>
<dbReference type="EMBL" id="DQ305898">
    <property type="protein sequence ID" value="ABC26274.1"/>
    <property type="molecule type" value="Genomic_DNA"/>
</dbReference>
<dbReference type="EMBL" id="DQ305899">
    <property type="protein sequence ID" value="ABC26275.1"/>
    <property type="molecule type" value="Genomic_DNA"/>
</dbReference>
<dbReference type="EMBL" id="DQ305900">
    <property type="protein sequence ID" value="ABC26276.1"/>
    <property type="molecule type" value="Genomic_DNA"/>
</dbReference>
<dbReference type="EMBL" id="DQ305901">
    <property type="protein sequence ID" value="ABC26277.1"/>
    <property type="molecule type" value="Genomic_DNA"/>
</dbReference>
<dbReference type="EMBL" id="DQ305902">
    <property type="protein sequence ID" value="ABC26278.1"/>
    <property type="molecule type" value="Genomic_DNA"/>
</dbReference>
<dbReference type="EMBL" id="DQ305903">
    <property type="protein sequence ID" value="ABC26279.1"/>
    <property type="molecule type" value="Genomic_DNA"/>
</dbReference>
<dbReference type="EMBL" id="DQ305904">
    <property type="protein sequence ID" value="ABC26280.1"/>
    <property type="molecule type" value="Genomic_DNA"/>
</dbReference>
<dbReference type="EMBL" id="DQ305905">
    <property type="protein sequence ID" value="ABC26281.1"/>
    <property type="molecule type" value="Genomic_DNA"/>
</dbReference>
<dbReference type="EMBL" id="DQ305906">
    <property type="protein sequence ID" value="ABC26282.1"/>
    <property type="molecule type" value="Genomic_DNA"/>
</dbReference>
<dbReference type="EMBL" id="DQ305907">
    <property type="protein sequence ID" value="ABC26283.1"/>
    <property type="molecule type" value="Genomic_DNA"/>
</dbReference>
<dbReference type="EMBL" id="DQ305908">
    <property type="protein sequence ID" value="ABC26284.1"/>
    <property type="molecule type" value="Genomic_DNA"/>
</dbReference>
<dbReference type="EMBL" id="DQ305909">
    <property type="protein sequence ID" value="ABC26285.1"/>
    <property type="molecule type" value="Genomic_DNA"/>
</dbReference>
<dbReference type="EMBL" id="DQ305910">
    <property type="protein sequence ID" value="ABC26286.1"/>
    <property type="molecule type" value="Genomic_DNA"/>
</dbReference>
<dbReference type="EMBL" id="DQ305911">
    <property type="protein sequence ID" value="ABC26287.1"/>
    <property type="molecule type" value="Genomic_DNA"/>
</dbReference>
<dbReference type="EMBL" id="DQ305912">
    <property type="protein sequence ID" value="ABC26288.1"/>
    <property type="molecule type" value="Genomic_DNA"/>
</dbReference>
<dbReference type="EMBL" id="DQ305913">
    <property type="protein sequence ID" value="ABC26289.1"/>
    <property type="molecule type" value="Genomic_DNA"/>
</dbReference>
<dbReference type="EMBL" id="DQ305914">
    <property type="protein sequence ID" value="ABC26290.1"/>
    <property type="molecule type" value="Genomic_DNA"/>
</dbReference>
<dbReference type="EMBL" id="DQ305915">
    <property type="protein sequence ID" value="ABC26291.1"/>
    <property type="molecule type" value="Genomic_DNA"/>
</dbReference>
<dbReference type="EMBL" id="DQ305916">
    <property type="protein sequence ID" value="ABC26292.1"/>
    <property type="molecule type" value="Genomic_DNA"/>
</dbReference>
<dbReference type="EMBL" id="DQ305917">
    <property type="protein sequence ID" value="ABC26293.1"/>
    <property type="molecule type" value="Genomic_DNA"/>
</dbReference>
<dbReference type="EMBL" id="DQ305918">
    <property type="protein sequence ID" value="ABC26294.1"/>
    <property type="molecule type" value="Genomic_DNA"/>
</dbReference>
<dbReference type="EMBL" id="DQ305919">
    <property type="protein sequence ID" value="ABC26295.1"/>
    <property type="molecule type" value="Genomic_DNA"/>
</dbReference>
<dbReference type="EMBL" id="DQ305920">
    <property type="protein sequence ID" value="ABC26296.1"/>
    <property type="molecule type" value="Genomic_DNA"/>
</dbReference>
<dbReference type="EMBL" id="DQ305921">
    <property type="protein sequence ID" value="ABC26297.1"/>
    <property type="molecule type" value="Genomic_DNA"/>
</dbReference>
<dbReference type="EMBL" id="DQ305922">
    <property type="protein sequence ID" value="ABC26298.1"/>
    <property type="molecule type" value="Genomic_DNA"/>
</dbReference>
<dbReference type="EMBL" id="DQ305923">
    <property type="protein sequence ID" value="ABC26299.1"/>
    <property type="molecule type" value="Genomic_DNA"/>
</dbReference>
<dbReference type="EMBL" id="DQ305924">
    <property type="protein sequence ID" value="ABC26300.1"/>
    <property type="molecule type" value="Genomic_DNA"/>
</dbReference>
<dbReference type="EMBL" id="DQ305925">
    <property type="protein sequence ID" value="ABC26301.1"/>
    <property type="molecule type" value="Genomic_DNA"/>
</dbReference>
<dbReference type="EMBL" id="DQ305926">
    <property type="protein sequence ID" value="ABC26302.1"/>
    <property type="molecule type" value="Genomic_DNA"/>
</dbReference>
<dbReference type="EMBL" id="DQ305927">
    <property type="protein sequence ID" value="ABC26303.1"/>
    <property type="molecule type" value="Genomic_DNA"/>
</dbReference>
<dbReference type="EMBL" id="DQ305928">
    <property type="protein sequence ID" value="ABC26304.1"/>
    <property type="molecule type" value="Genomic_DNA"/>
</dbReference>
<dbReference type="EMBL" id="DQ305929">
    <property type="protein sequence ID" value="ABC26305.1"/>
    <property type="molecule type" value="Genomic_DNA"/>
</dbReference>
<dbReference type="EMBL" id="DQ305930">
    <property type="protein sequence ID" value="ABC26306.1"/>
    <property type="molecule type" value="Genomic_DNA"/>
</dbReference>
<dbReference type="EMBL" id="DQ305931">
    <property type="protein sequence ID" value="ABC26307.1"/>
    <property type="molecule type" value="Genomic_DNA"/>
</dbReference>
<dbReference type="EMBL" id="DQ305932">
    <property type="protein sequence ID" value="ABC26308.1"/>
    <property type="molecule type" value="Genomic_DNA"/>
</dbReference>
<dbReference type="EMBL" id="DQ305933">
    <property type="protein sequence ID" value="ABC26309.1"/>
    <property type="molecule type" value="Genomic_DNA"/>
</dbReference>
<dbReference type="EMBL" id="DQ305934">
    <property type="protein sequence ID" value="ABC26310.1"/>
    <property type="molecule type" value="Genomic_DNA"/>
</dbReference>
<dbReference type="EMBL" id="DQ305935">
    <property type="protein sequence ID" value="ABC26311.1"/>
    <property type="molecule type" value="Genomic_DNA"/>
</dbReference>
<dbReference type="EMBL" id="DQ305936">
    <property type="protein sequence ID" value="ABC26312.1"/>
    <property type="molecule type" value="Genomic_DNA"/>
</dbReference>
<dbReference type="EMBL" id="DQ305937">
    <property type="protein sequence ID" value="ABC26313.1"/>
    <property type="molecule type" value="Genomic_DNA"/>
</dbReference>
<dbReference type="EMBL" id="DQ305938">
    <property type="protein sequence ID" value="ABC26314.1"/>
    <property type="molecule type" value="Genomic_DNA"/>
</dbReference>
<dbReference type="EMBL" id="DQ305939">
    <property type="protein sequence ID" value="ABC26315.1"/>
    <property type="molecule type" value="Genomic_DNA"/>
</dbReference>
<dbReference type="EMBL" id="DQ305940">
    <property type="protein sequence ID" value="ABC26316.1"/>
    <property type="molecule type" value="Genomic_DNA"/>
</dbReference>
<dbReference type="EMBL" id="DQ305941">
    <property type="protein sequence ID" value="ABC26317.1"/>
    <property type="molecule type" value="Genomic_DNA"/>
</dbReference>
<dbReference type="EMBL" id="DQ305942">
    <property type="protein sequence ID" value="ABC26318.1"/>
    <property type="molecule type" value="Genomic_DNA"/>
</dbReference>
<dbReference type="EMBL" id="DQ305943">
    <property type="protein sequence ID" value="ABC26319.1"/>
    <property type="molecule type" value="Genomic_DNA"/>
</dbReference>
<dbReference type="EMBL" id="DQ305944">
    <property type="protein sequence ID" value="ABC26320.1"/>
    <property type="molecule type" value="Genomic_DNA"/>
</dbReference>
<dbReference type="EMBL" id="DQ305945">
    <property type="protein sequence ID" value="ABC26321.1"/>
    <property type="molecule type" value="Genomic_DNA"/>
</dbReference>
<dbReference type="EMBL" id="DQ305946">
    <property type="protein sequence ID" value="ABC26322.1"/>
    <property type="molecule type" value="Genomic_DNA"/>
</dbReference>
<dbReference type="EMBL" id="DQ305947">
    <property type="protein sequence ID" value="ABC26323.1"/>
    <property type="molecule type" value="Genomic_DNA"/>
</dbReference>
<dbReference type="EMBL" id="DQ305948">
    <property type="protein sequence ID" value="ABC26324.1"/>
    <property type="molecule type" value="Genomic_DNA"/>
</dbReference>
<dbReference type="EMBL" id="DQ305949">
    <property type="protein sequence ID" value="ABC26325.1"/>
    <property type="molecule type" value="Genomic_DNA"/>
</dbReference>
<dbReference type="EMBL" id="DQ305950">
    <property type="protein sequence ID" value="ABC26326.1"/>
    <property type="molecule type" value="Genomic_DNA"/>
</dbReference>
<dbReference type="EMBL" id="DQ305951">
    <property type="protein sequence ID" value="ABC26327.1"/>
    <property type="molecule type" value="Genomic_DNA"/>
</dbReference>
<dbReference type="EMBL" id="DQ305952">
    <property type="protein sequence ID" value="ABC26328.1"/>
    <property type="molecule type" value="Genomic_DNA"/>
</dbReference>
<dbReference type="EMBL" id="DQ305953">
    <property type="protein sequence ID" value="ABC26329.1"/>
    <property type="molecule type" value="Genomic_DNA"/>
</dbReference>
<dbReference type="EMBL" id="DQ305954">
    <property type="protein sequence ID" value="ABC26330.1"/>
    <property type="molecule type" value="Genomic_DNA"/>
</dbReference>
<dbReference type="EMBL" id="DQ305955">
    <property type="protein sequence ID" value="ABC26331.1"/>
    <property type="molecule type" value="Genomic_DNA"/>
</dbReference>
<dbReference type="EMBL" id="DQ305956">
    <property type="protein sequence ID" value="ABC26332.1"/>
    <property type="molecule type" value="Genomic_DNA"/>
</dbReference>
<dbReference type="EMBL" id="DQ305957">
    <property type="protein sequence ID" value="ABC26333.1"/>
    <property type="molecule type" value="Genomic_DNA"/>
</dbReference>
<dbReference type="EMBL" id="DQ305958">
    <property type="protein sequence ID" value="ABC26334.1"/>
    <property type="molecule type" value="Genomic_DNA"/>
</dbReference>
<dbReference type="EMBL" id="DQ305959">
    <property type="protein sequence ID" value="ABC26335.1"/>
    <property type="molecule type" value="Genomic_DNA"/>
</dbReference>
<dbReference type="EMBL" id="DQ305960">
    <property type="protein sequence ID" value="ABC26336.1"/>
    <property type="molecule type" value="Genomic_DNA"/>
</dbReference>
<dbReference type="EMBL" id="DQ305961">
    <property type="protein sequence ID" value="ABC26337.1"/>
    <property type="molecule type" value="Genomic_DNA"/>
</dbReference>
<dbReference type="EMBL" id="DQ305962">
    <property type="protein sequence ID" value="ABC26338.1"/>
    <property type="molecule type" value="Genomic_DNA"/>
</dbReference>
<dbReference type="EMBL" id="DQ305963">
    <property type="protein sequence ID" value="ABC26339.1"/>
    <property type="molecule type" value="Genomic_DNA"/>
</dbReference>
<dbReference type="EMBL" id="DQ305964">
    <property type="protein sequence ID" value="ABC26340.1"/>
    <property type="molecule type" value="Genomic_DNA"/>
</dbReference>
<dbReference type="EMBL" id="DQ305965">
    <property type="protein sequence ID" value="ABC26341.1"/>
    <property type="molecule type" value="Genomic_DNA"/>
</dbReference>
<dbReference type="EMBL" id="DQ305966">
    <property type="protein sequence ID" value="ABC26342.1"/>
    <property type="molecule type" value="Genomic_DNA"/>
</dbReference>
<dbReference type="EMBL" id="DQ305967">
    <property type="protein sequence ID" value="ABC26343.1"/>
    <property type="molecule type" value="Genomic_DNA"/>
</dbReference>
<dbReference type="EMBL" id="DQ305968">
    <property type="protein sequence ID" value="ABC26344.1"/>
    <property type="molecule type" value="Genomic_DNA"/>
</dbReference>
<dbReference type="EMBL" id="DQ305969">
    <property type="protein sequence ID" value="ABC26345.1"/>
    <property type="molecule type" value="Genomic_DNA"/>
</dbReference>
<dbReference type="EMBL" id="DQ305970">
    <property type="protein sequence ID" value="ABC26346.1"/>
    <property type="molecule type" value="Genomic_DNA"/>
</dbReference>
<dbReference type="EMBL" id="DQ305971">
    <property type="protein sequence ID" value="ABC26347.1"/>
    <property type="molecule type" value="Genomic_DNA"/>
</dbReference>
<dbReference type="EMBL" id="DQ305972">
    <property type="protein sequence ID" value="ABC26348.1"/>
    <property type="molecule type" value="Genomic_DNA"/>
</dbReference>
<dbReference type="EMBL" id="DQ305973">
    <property type="protein sequence ID" value="ABC26349.1"/>
    <property type="molecule type" value="Genomic_DNA"/>
</dbReference>
<dbReference type="EMBL" id="DQ305974">
    <property type="protein sequence ID" value="ABC26350.1"/>
    <property type="molecule type" value="Genomic_DNA"/>
</dbReference>
<dbReference type="EMBL" id="DQ305975">
    <property type="protein sequence ID" value="ABC26351.1"/>
    <property type="molecule type" value="Genomic_DNA"/>
</dbReference>
<dbReference type="EMBL" id="AK290912">
    <property type="protein sequence ID" value="BAF83601.1"/>
    <property type="molecule type" value="mRNA"/>
</dbReference>
<dbReference type="EMBL" id="AY338489">
    <property type="protein sequence ID" value="AAP88036.1"/>
    <property type="molecule type" value="Genomic_DNA"/>
</dbReference>
<dbReference type="EMBL" id="AY800271">
    <property type="protein sequence ID" value="AAV50002.1"/>
    <property type="molecule type" value="Genomic_DNA"/>
</dbReference>
<dbReference type="EMBL" id="BC047666">
    <property type="protein sequence ID" value="AAH47666.1"/>
    <property type="molecule type" value="mRNA"/>
</dbReference>
<dbReference type="EMBL" id="M75164">
    <property type="protein sequence ID" value="AAA59905.1"/>
    <property type="molecule type" value="Genomic_DNA"/>
</dbReference>
<dbReference type="CCDS" id="CCDS6007.1"/>
<dbReference type="PIR" id="A34585">
    <property type="entry name" value="A34585"/>
</dbReference>
<dbReference type="RefSeq" id="NP_000653.3">
    <property type="nucleotide sequence ID" value="NM_000662.7"/>
</dbReference>
<dbReference type="RefSeq" id="NP_001153642.1">
    <property type="nucleotide sequence ID" value="NM_001160170.4"/>
</dbReference>
<dbReference type="RefSeq" id="NP_001153643.1">
    <property type="nucleotide sequence ID" value="NM_001160171.4"/>
</dbReference>
<dbReference type="RefSeq" id="NP_001153644.1">
    <property type="nucleotide sequence ID" value="NM_001160172.4"/>
</dbReference>
<dbReference type="RefSeq" id="NP_001153645.1">
    <property type="nucleotide sequence ID" value="NM_001160173.4"/>
</dbReference>
<dbReference type="RefSeq" id="NP_001153646.1">
    <property type="nucleotide sequence ID" value="NM_001160174.3"/>
</dbReference>
<dbReference type="RefSeq" id="NP_001153651.1">
    <property type="nucleotide sequence ID" value="NM_001160179.3"/>
</dbReference>
<dbReference type="RefSeq" id="XP_006716473.1">
    <property type="nucleotide sequence ID" value="XM_006716410.4"/>
</dbReference>
<dbReference type="RefSeq" id="XP_011542991.1">
    <property type="nucleotide sequence ID" value="XM_011544689.3"/>
</dbReference>
<dbReference type="RefSeq" id="XP_047278355.1">
    <property type="nucleotide sequence ID" value="XM_047422399.1"/>
</dbReference>
<dbReference type="RefSeq" id="XP_054217434.1">
    <property type="nucleotide sequence ID" value="XM_054361459.1"/>
</dbReference>
<dbReference type="RefSeq" id="XP_054217435.1">
    <property type="nucleotide sequence ID" value="XM_054361460.1"/>
</dbReference>
<dbReference type="RefSeq" id="XP_054217436.1">
    <property type="nucleotide sequence ID" value="XM_054361461.1"/>
</dbReference>
<dbReference type="PDB" id="2IJA">
    <property type="method" value="X-ray"/>
    <property type="resolution" value="1.70 A"/>
    <property type="chains" value="A=2-290"/>
</dbReference>
<dbReference type="PDB" id="2PQT">
    <property type="method" value="X-ray"/>
    <property type="resolution" value="1.78 A"/>
    <property type="chains" value="A=2-290"/>
</dbReference>
<dbReference type="PDBsum" id="2IJA"/>
<dbReference type="PDBsum" id="2PQT"/>
<dbReference type="SMR" id="P18440"/>
<dbReference type="BioGRID" id="106527">
    <property type="interactions" value="9"/>
</dbReference>
<dbReference type="FunCoup" id="P18440">
    <property type="interactions" value="486"/>
</dbReference>
<dbReference type="IntAct" id="P18440">
    <property type="interactions" value="5"/>
</dbReference>
<dbReference type="STRING" id="9606.ENSP00000443194"/>
<dbReference type="BindingDB" id="P18440"/>
<dbReference type="ChEMBL" id="CHEMBL5101"/>
<dbReference type="DrugBank" id="DB11640">
    <property type="generic name" value="Amifampridine"/>
</dbReference>
<dbReference type="DrugBank" id="DB00244">
    <property type="generic name" value="Mesalazine"/>
</dbReference>
<dbReference type="DrugBank" id="DB01015">
    <property type="generic name" value="Sulfamethoxazole"/>
</dbReference>
<dbReference type="GlyGen" id="P18440">
    <property type="glycosylation" value="1 site, 1 O-linked glycan (1 site)"/>
</dbReference>
<dbReference type="iPTMnet" id="P18440"/>
<dbReference type="PhosphoSitePlus" id="P18440"/>
<dbReference type="SwissPalm" id="P18440"/>
<dbReference type="BioMuta" id="NAT1"/>
<dbReference type="DMDM" id="114234"/>
<dbReference type="jPOST" id="P18440"/>
<dbReference type="MassIVE" id="P18440"/>
<dbReference type="PaxDb" id="9606-ENSP00000443194"/>
<dbReference type="PeptideAtlas" id="P18440"/>
<dbReference type="ProteomicsDB" id="53563"/>
<dbReference type="Pumba" id="P18440"/>
<dbReference type="Antibodypedia" id="22350">
    <property type="antibodies" value="348 antibodies from 34 providers"/>
</dbReference>
<dbReference type="DNASU" id="9"/>
<dbReference type="Ensembl" id="ENST00000307719.9">
    <property type="protein sequence ID" value="ENSP00000307218.4"/>
    <property type="gene ID" value="ENSG00000171428.15"/>
</dbReference>
<dbReference type="Ensembl" id="ENST00000517492.5">
    <property type="protein sequence ID" value="ENSP00000429407.1"/>
    <property type="gene ID" value="ENSG00000171428.15"/>
</dbReference>
<dbReference type="Ensembl" id="ENST00000518029.5">
    <property type="protein sequence ID" value="ENSP00000428270.1"/>
    <property type="gene ID" value="ENSG00000171428.15"/>
</dbReference>
<dbReference type="Ensembl" id="ENST00000520546.1">
    <property type="protein sequence ID" value="ENSP00000429341.1"/>
    <property type="gene ID" value="ENSG00000171428.15"/>
</dbReference>
<dbReference type="GeneID" id="9"/>
<dbReference type="KEGG" id="hsa:9"/>
<dbReference type="MANE-Select" id="ENST00000307719.9">
    <property type="protein sequence ID" value="ENSP00000307218.4"/>
    <property type="RefSeq nucleotide sequence ID" value="NM_000662.8"/>
    <property type="RefSeq protein sequence ID" value="NP_000653.3"/>
</dbReference>
<dbReference type="UCSC" id="uc003wyq.4">
    <property type="organism name" value="human"/>
</dbReference>
<dbReference type="AGR" id="HGNC:7645"/>
<dbReference type="CTD" id="9"/>
<dbReference type="DisGeNET" id="9"/>
<dbReference type="GeneCards" id="NAT1"/>
<dbReference type="HGNC" id="HGNC:7645">
    <property type="gene designation" value="NAT1"/>
</dbReference>
<dbReference type="HPA" id="ENSG00000171428">
    <property type="expression patterns" value="Low tissue specificity"/>
</dbReference>
<dbReference type="MIM" id="108345">
    <property type="type" value="gene"/>
</dbReference>
<dbReference type="neXtProt" id="NX_P18440"/>
<dbReference type="OpenTargets" id="ENSG00000171428"/>
<dbReference type="PharmGKB" id="PA17"/>
<dbReference type="VEuPathDB" id="HostDB:ENSG00000171428"/>
<dbReference type="eggNOG" id="ENOG502RD0D">
    <property type="taxonomic scope" value="Eukaryota"/>
</dbReference>
<dbReference type="GeneTree" id="ENSGT00390000012054"/>
<dbReference type="HOGENOM" id="CLU_049918_3_0_1"/>
<dbReference type="InParanoid" id="P18440"/>
<dbReference type="OMA" id="CYEHNTL"/>
<dbReference type="OrthoDB" id="10260017at2759"/>
<dbReference type="PAN-GO" id="P18440">
    <property type="GO annotations" value="1 GO annotation based on evolutionary models"/>
</dbReference>
<dbReference type="PhylomeDB" id="P18440"/>
<dbReference type="BRENDA" id="2.3.1.5">
    <property type="organism ID" value="2681"/>
</dbReference>
<dbReference type="PathwayCommons" id="P18440"/>
<dbReference type="Reactome" id="R-HSA-156582">
    <property type="pathway name" value="Acetylation"/>
</dbReference>
<dbReference type="Reactome" id="R-HSA-9753281">
    <property type="pathway name" value="Paracetamol ADME"/>
</dbReference>
<dbReference type="SignaLink" id="P18440"/>
<dbReference type="SIGNOR" id="P18440"/>
<dbReference type="BioGRID-ORCS" id="9">
    <property type="hits" value="9 hits in 1118 CRISPR screens"/>
</dbReference>
<dbReference type="ChiTaRS" id="NAT1">
    <property type="organism name" value="human"/>
</dbReference>
<dbReference type="EvolutionaryTrace" id="P18440"/>
<dbReference type="GeneWiki" id="N-acetyltransferase_1"/>
<dbReference type="GenomeRNAi" id="9"/>
<dbReference type="Pharos" id="P18440">
    <property type="development level" value="Tchem"/>
</dbReference>
<dbReference type="PRO" id="PR:P18440"/>
<dbReference type="Proteomes" id="UP000005640">
    <property type="component" value="Chromosome 8"/>
</dbReference>
<dbReference type="RNAct" id="P18440">
    <property type="molecule type" value="protein"/>
</dbReference>
<dbReference type="Bgee" id="ENSG00000171428">
    <property type="expression patterns" value="Expressed in bronchial epithelial cell and 158 other cell types or tissues"/>
</dbReference>
<dbReference type="ExpressionAtlas" id="P18440">
    <property type="expression patterns" value="baseline and differential"/>
</dbReference>
<dbReference type="GO" id="GO:0005829">
    <property type="term" value="C:cytosol"/>
    <property type="evidence" value="ECO:0000304"/>
    <property type="project" value="Reactome"/>
</dbReference>
<dbReference type="GO" id="GO:0004060">
    <property type="term" value="F:arylamine N-acetyltransferase activity"/>
    <property type="evidence" value="ECO:0000318"/>
    <property type="project" value="GO_Central"/>
</dbReference>
<dbReference type="GO" id="GO:0006805">
    <property type="term" value="P:xenobiotic metabolic process"/>
    <property type="evidence" value="ECO:0000304"/>
    <property type="project" value="Reactome"/>
</dbReference>
<dbReference type="FunFam" id="3.30.2140.20:FF:000001">
    <property type="entry name" value="Arylamine N-acetyltransferase 1"/>
    <property type="match status" value="1"/>
</dbReference>
<dbReference type="Gene3D" id="3.30.2140.20">
    <property type="match status" value="1"/>
</dbReference>
<dbReference type="InterPro" id="IPR001447">
    <property type="entry name" value="Arylamine_N-AcTrfase"/>
</dbReference>
<dbReference type="InterPro" id="IPR053710">
    <property type="entry name" value="Arylamine_NAT_domain_sf"/>
</dbReference>
<dbReference type="InterPro" id="IPR038765">
    <property type="entry name" value="Papain-like_cys_pep_sf"/>
</dbReference>
<dbReference type="PANTHER" id="PTHR11786:SF8">
    <property type="entry name" value="ARYLAMINE N-ACETYLTRANSFERASE 1"/>
    <property type="match status" value="1"/>
</dbReference>
<dbReference type="PANTHER" id="PTHR11786">
    <property type="entry name" value="N-HYDROXYARYLAMINE O-ACETYLTRANSFERASE"/>
    <property type="match status" value="1"/>
</dbReference>
<dbReference type="Pfam" id="PF00797">
    <property type="entry name" value="Acetyltransf_2"/>
    <property type="match status" value="1"/>
</dbReference>
<dbReference type="PRINTS" id="PR01543">
    <property type="entry name" value="ANATRNSFRASE"/>
</dbReference>
<dbReference type="SUPFAM" id="SSF54001">
    <property type="entry name" value="Cysteine proteinases"/>
    <property type="match status" value="1"/>
</dbReference>
<organism>
    <name type="scientific">Homo sapiens</name>
    <name type="common">Human</name>
    <dbReference type="NCBI Taxonomy" id="9606"/>
    <lineage>
        <taxon>Eukaryota</taxon>
        <taxon>Metazoa</taxon>
        <taxon>Chordata</taxon>
        <taxon>Craniata</taxon>
        <taxon>Vertebrata</taxon>
        <taxon>Euteleostomi</taxon>
        <taxon>Mammalia</taxon>
        <taxon>Eutheria</taxon>
        <taxon>Euarchontoglires</taxon>
        <taxon>Primates</taxon>
        <taxon>Haplorrhini</taxon>
        <taxon>Catarrhini</taxon>
        <taxon>Hominidae</taxon>
        <taxon>Homo</taxon>
    </lineage>
</organism>
<reference key="1">
    <citation type="journal article" date="1990" name="DNA Cell Biol.">
        <title>Human arylamine N-acetyltransferase genes: isolation, chromosomal localization, and functional expression.</title>
        <authorList>
            <person name="Blum M."/>
            <person name="Grant D.M."/>
            <person name="McBride W."/>
            <person name="Heim M."/>
            <person name="Meyer U.A."/>
        </authorList>
    </citation>
    <scope>NUCLEOTIDE SEQUENCE [GENOMIC DNA] (ALLELE NAT1*4)</scope>
    <source>
        <tissue>Leukocyte</tissue>
    </source>
</reference>
<reference key="2">
    <citation type="journal article" date="1990" name="J. Biol. Chem.">
        <title>Cloning and expression of cDNAs for polymorphic and monomorphic arylamine N-acetyltransferases from human liver.</title>
        <authorList>
            <person name="Ohsako S."/>
            <person name="Deguchi T."/>
        </authorList>
    </citation>
    <scope>NUCLEOTIDE SEQUENCE [MRNA]</scope>
    <scope>VARIANTS NAT1*5 THR-117 AND 166-ARG-GLU-167 DELINS THR-GLN</scope>
    <source>
        <tissue>Liver</tissue>
    </source>
</reference>
<reference key="3">
    <citation type="journal article" date="1993" name="Arch. Biochem. Biophys.">
        <title>Structural heterogeneity of Caucasian N-acetyltransferase at the NAT1 gene locus.</title>
        <authorList>
            <person name="Vatsis K.P."/>
            <person name="Weber W.W."/>
        </authorList>
    </citation>
    <scope>NUCLEOTIDE SEQUENCE [GENOMIC DNA]</scope>
    <scope>VARIANTS NAT1*11 ILE-149 AND ALA-214</scope>
</reference>
<reference key="4">
    <citation type="journal article" date="1997" name="Biochem. Biophys. Res. Commun.">
        <title>Identification of a novel allele at the human NAT1 acetyltransferase locus.</title>
        <authorList>
            <person name="Doll M.A."/>
            <person name="Jiang W."/>
            <person name="Deitz A.C."/>
            <person name="Rustan T.D."/>
            <person name="Hein D.W."/>
        </authorList>
    </citation>
    <scope>NUCLEOTIDE SEQUENCE [GENOMIC DNA]</scope>
    <scope>VARIANTS NAT1*11 ILE-149 AND ALA-214</scope>
    <source>
        <tissue>Blood</tissue>
    </source>
</reference>
<reference key="5">
    <citation type="journal article" date="1998" name="Pharmacogenetics">
        <title>Functional polymorphism of the human arylamine N-acetyltransferase type 1 gene caused by C190T and G560A mutations.</title>
        <authorList>
            <person name="Butcher N.J."/>
            <person name="Ilett K.F."/>
            <person name="Minchin R.F."/>
        </authorList>
    </citation>
    <scope>NUCLEOTIDE SEQUENCE [GENOMIC DNA]</scope>
    <scope>VARIANTS TRP-64 AND GLN-187</scope>
</reference>
<reference key="6">
    <citation type="submission" date="1998-05" db="EMBL/GenBank/DDBJ databases">
        <title>Homo sapiens N-acetyltransferase-1 (NAT1) gene complete cds.</title>
        <authorList>
            <person name="Deitz A.C."/>
            <person name="Fretland A.J."/>
            <person name="Leff M.A."/>
            <person name="Doll M.A."/>
            <person name="Hein D.W."/>
        </authorList>
    </citation>
    <scope>NUCLEOTIDE SEQUENCE [GENOMIC DNA]</scope>
</reference>
<reference key="7">
    <citation type="journal article" date="2000" name="Pharmacogenetics">
        <title>Molecular analysis of the N-acetyltransferase 1 gene (NAT1*) using polymerase chain reaction-restriction fragment-single strand conformation polymorphism assay.</title>
        <authorList>
            <person name="Lo-Guidice J.-M."/>
            <person name="Allorge D."/>
            <person name="Chevalier D."/>
            <person name="Debuysere H."/>
            <person name="Fazio F."/>
            <person name="Lafitte J.-J."/>
            <person name="Broly F."/>
        </authorList>
    </citation>
    <scope>NUCLEOTIDE SEQUENCE [GENOMIC DNA]</scope>
</reference>
<reference key="8">
    <citation type="submission" date="2000-05" db="EMBL/GenBank/DDBJ databases">
        <title>Homo sapiens arylamine N-acetyltransferase type 1 (NAT1) gene, allele NAT1*11B.</title>
        <authorList>
            <person name="Johnson N."/>
            <person name="Sim E."/>
        </authorList>
    </citation>
    <scope>NUCLEOTIDE SEQUENCE [GENOMIC DNA]</scope>
    <scope>VARIANTS ILE-149 AND ALA-214</scope>
</reference>
<reference key="9">
    <citation type="submission" date="2001-05" db="EMBL/GenBank/DDBJ databases">
        <title>Homo sapiens arylamine N-acetyltransferase type 1 (NAT1) gene, NAT1*4 allele.</title>
        <authorList>
            <person name="Johnson N."/>
            <person name="Sim E."/>
        </authorList>
    </citation>
    <scope>NUCLEOTIDE SEQUENCE [GENOMIC DNA] (ALLELE NAT1*4)</scope>
</reference>
<reference key="10">
    <citation type="journal article" date="2006" name="Am. J. Hum. Genet.">
        <title>Deciphering the ancient and complex evolutionary history of human arylamine N-acetyltransferase genes.</title>
        <authorList>
            <person name="Patin E."/>
            <person name="Barreiro L.B."/>
            <person name="Sabeti P.C."/>
            <person name="Austerlitz F."/>
            <person name="Luca F."/>
            <person name="Sajantila A."/>
            <person name="Behar D.M."/>
            <person name="Semino O."/>
            <person name="Sakuntabhai A."/>
            <person name="Guiso N."/>
            <person name="Gicquel B."/>
            <person name="McElreavey K."/>
            <person name="Harding R.M."/>
            <person name="Heyer E."/>
            <person name="Quintana-Murci L."/>
        </authorList>
    </citation>
    <scope>NUCLEOTIDE SEQUENCE [GENOMIC DNA]</scope>
    <scope>VARIANTS ILE-149 AND ALA-214</scope>
</reference>
<reference key="11">
    <citation type="journal article" date="2004" name="Nat. Genet.">
        <title>Complete sequencing and characterization of 21,243 full-length human cDNAs.</title>
        <authorList>
            <person name="Ota T."/>
            <person name="Suzuki Y."/>
            <person name="Nishikawa T."/>
            <person name="Otsuki T."/>
            <person name="Sugiyama T."/>
            <person name="Irie R."/>
            <person name="Wakamatsu A."/>
            <person name="Hayashi K."/>
            <person name="Sato H."/>
            <person name="Nagai K."/>
            <person name="Kimura K."/>
            <person name="Makita H."/>
            <person name="Sekine M."/>
            <person name="Obayashi M."/>
            <person name="Nishi T."/>
            <person name="Shibahara T."/>
            <person name="Tanaka T."/>
            <person name="Ishii S."/>
            <person name="Yamamoto J."/>
            <person name="Saito K."/>
            <person name="Kawai Y."/>
            <person name="Isono Y."/>
            <person name="Nakamura Y."/>
            <person name="Nagahari K."/>
            <person name="Murakami K."/>
            <person name="Yasuda T."/>
            <person name="Iwayanagi T."/>
            <person name="Wagatsuma M."/>
            <person name="Shiratori A."/>
            <person name="Sudo H."/>
            <person name="Hosoiri T."/>
            <person name="Kaku Y."/>
            <person name="Kodaira H."/>
            <person name="Kondo H."/>
            <person name="Sugawara M."/>
            <person name="Takahashi M."/>
            <person name="Kanda K."/>
            <person name="Yokoi T."/>
            <person name="Furuya T."/>
            <person name="Kikkawa E."/>
            <person name="Omura Y."/>
            <person name="Abe K."/>
            <person name="Kamihara K."/>
            <person name="Katsuta N."/>
            <person name="Sato K."/>
            <person name="Tanikawa M."/>
            <person name="Yamazaki M."/>
            <person name="Ninomiya K."/>
            <person name="Ishibashi T."/>
            <person name="Yamashita H."/>
            <person name="Murakawa K."/>
            <person name="Fujimori K."/>
            <person name="Tanai H."/>
            <person name="Kimata M."/>
            <person name="Watanabe M."/>
            <person name="Hiraoka S."/>
            <person name="Chiba Y."/>
            <person name="Ishida S."/>
            <person name="Ono Y."/>
            <person name="Takiguchi S."/>
            <person name="Watanabe S."/>
            <person name="Yosida M."/>
            <person name="Hotuta T."/>
            <person name="Kusano J."/>
            <person name="Kanehori K."/>
            <person name="Takahashi-Fujii A."/>
            <person name="Hara H."/>
            <person name="Tanase T.-O."/>
            <person name="Nomura Y."/>
            <person name="Togiya S."/>
            <person name="Komai F."/>
            <person name="Hara R."/>
            <person name="Takeuchi K."/>
            <person name="Arita M."/>
            <person name="Imose N."/>
            <person name="Musashino K."/>
            <person name="Yuuki H."/>
            <person name="Oshima A."/>
            <person name="Sasaki N."/>
            <person name="Aotsuka S."/>
            <person name="Yoshikawa Y."/>
            <person name="Matsunawa H."/>
            <person name="Ichihara T."/>
            <person name="Shiohata N."/>
            <person name="Sano S."/>
            <person name="Moriya S."/>
            <person name="Momiyama H."/>
            <person name="Satoh N."/>
            <person name="Takami S."/>
            <person name="Terashima Y."/>
            <person name="Suzuki O."/>
            <person name="Nakagawa S."/>
            <person name="Senoh A."/>
            <person name="Mizoguchi H."/>
            <person name="Goto Y."/>
            <person name="Shimizu F."/>
            <person name="Wakebe H."/>
            <person name="Hishigaki H."/>
            <person name="Watanabe T."/>
            <person name="Sugiyama A."/>
            <person name="Takemoto M."/>
            <person name="Kawakami B."/>
            <person name="Yamazaki M."/>
            <person name="Watanabe K."/>
            <person name="Kumagai A."/>
            <person name="Itakura S."/>
            <person name="Fukuzumi Y."/>
            <person name="Fujimori Y."/>
            <person name="Komiyama M."/>
            <person name="Tashiro H."/>
            <person name="Tanigami A."/>
            <person name="Fujiwara T."/>
            <person name="Ono T."/>
            <person name="Yamada K."/>
            <person name="Fujii Y."/>
            <person name="Ozaki K."/>
            <person name="Hirao M."/>
            <person name="Ohmori Y."/>
            <person name="Kawabata A."/>
            <person name="Hikiji T."/>
            <person name="Kobatake N."/>
            <person name="Inagaki H."/>
            <person name="Ikema Y."/>
            <person name="Okamoto S."/>
            <person name="Okitani R."/>
            <person name="Kawakami T."/>
            <person name="Noguchi S."/>
            <person name="Itoh T."/>
            <person name="Shigeta K."/>
            <person name="Senba T."/>
            <person name="Matsumura K."/>
            <person name="Nakajima Y."/>
            <person name="Mizuno T."/>
            <person name="Morinaga M."/>
            <person name="Sasaki M."/>
            <person name="Togashi T."/>
            <person name="Oyama M."/>
            <person name="Hata H."/>
            <person name="Watanabe M."/>
            <person name="Komatsu T."/>
            <person name="Mizushima-Sugano J."/>
            <person name="Satoh T."/>
            <person name="Shirai Y."/>
            <person name="Takahashi Y."/>
            <person name="Nakagawa K."/>
            <person name="Okumura K."/>
            <person name="Nagase T."/>
            <person name="Nomura N."/>
            <person name="Kikuchi H."/>
            <person name="Masuho Y."/>
            <person name="Yamashita R."/>
            <person name="Nakai K."/>
            <person name="Yada T."/>
            <person name="Nakamura Y."/>
            <person name="Ohara O."/>
            <person name="Isogai T."/>
            <person name="Sugano S."/>
        </authorList>
    </citation>
    <scope>NUCLEOTIDE SEQUENCE [LARGE SCALE MRNA]</scope>
</reference>
<reference key="12">
    <citation type="submission" date="2004-10" db="EMBL/GenBank/DDBJ databases">
        <authorList>
            <consortium name="NIEHS SNPs program"/>
        </authorList>
    </citation>
    <scope>NUCLEOTIDE SEQUENCE [GENOMIC DNA]</scope>
    <scope>VARIANTS ILE-149 AND ALA-214</scope>
</reference>
<reference key="13">
    <citation type="journal article" date="2004" name="Genome Res.">
        <title>The status, quality, and expansion of the NIH full-length cDNA project: the Mammalian Gene Collection (MGC).</title>
        <authorList>
            <consortium name="The MGC Project Team"/>
        </authorList>
    </citation>
    <scope>NUCLEOTIDE SEQUENCE [LARGE SCALE MRNA]</scope>
    <source>
        <tissue>Lung</tissue>
    </source>
</reference>
<reference key="14">
    <citation type="journal article" date="1991" name="Biochem. Biophys. Res. Commun.">
        <title>Structure and restriction fragment length polymorphism of genes for human liver arylamine N-acetyltransferases.</title>
        <authorList>
            <person name="Ebisawa T."/>
            <person name="Deguchi T."/>
        </authorList>
    </citation>
    <scope>NUCLEOTIDE SEQUENCE [GENOMIC DNA] OF 1-22</scope>
    <source>
        <tissue>Liver</tissue>
    </source>
</reference>
<reference key="15">
    <citation type="journal article" date="1997" name="Biochem. J.">
        <title>Study of the role of the highly conserved residues Arg9 and Arg64 in the catalytic function of human N-acetyltransferases NAT1 and NAT2 by site-directed mutagenesis.</title>
        <authorList>
            <person name="Delomenie C."/>
            <person name="Goodfellow G.H."/>
            <person name="Krishnamoorthy R."/>
            <person name="Grant D.M."/>
            <person name="Dupret J.-M."/>
        </authorList>
    </citation>
    <scope>MUTAGENESIS OF ARG-64</scope>
</reference>
<reference key="16">
    <citation type="journal article" date="2012" name="Proc. Natl. Acad. Sci. U.S.A.">
        <title>N-terminal acetylome analyses and functional insights of the N-terminal acetyltransferase NatB.</title>
        <authorList>
            <person name="Van Damme P."/>
            <person name="Lasa M."/>
            <person name="Polevoda B."/>
            <person name="Gazquez C."/>
            <person name="Elosegui-Artola A."/>
            <person name="Kim D.S."/>
            <person name="De Juan-Pardo E."/>
            <person name="Demeyer K."/>
            <person name="Hole K."/>
            <person name="Larrea E."/>
            <person name="Timmerman E."/>
            <person name="Prieto J."/>
            <person name="Arnesen T."/>
            <person name="Sherman F."/>
            <person name="Gevaert K."/>
            <person name="Aldabe R."/>
        </authorList>
    </citation>
    <scope>ACETYLATION [LARGE SCALE ANALYSIS] AT MET-1</scope>
    <scope>IDENTIFICATION BY MASS SPECTROMETRY [LARGE SCALE ANALYSIS]</scope>
</reference>
<reference key="17">
    <citation type="journal article" date="2007" name="J. Biol. Chem.">
        <title>Structural basis of substrate-binding specificity of human arylamine N-acetyltransferases.</title>
        <authorList>
            <person name="Wu H."/>
            <person name="Dombrovsky L."/>
            <person name="Tempel W."/>
            <person name="Martin F."/>
            <person name="Loppnau P."/>
            <person name="Goodfellow G.H."/>
            <person name="Grant D.M."/>
            <person name="Plotnikov A.N."/>
        </authorList>
    </citation>
    <scope>X-RAY CRYSTALLOGRAPHY (1.7 ANGSTROMS) OF WILD-TYPE IN COMPLEX WITH 2-BROMOACETANILIDE AND OF MUTANT SER-125</scope>
    <scope>IDENTIFICATION BY MASS SPECTROMETRY</scope>
</reference>
<reference key="18">
    <citation type="journal article" date="1995" name="Cancer Res.">
        <title>Polymorphism in the N-acetyltransferase 1 (NAT1) polyadenylation signal: association of NAT1*10 allele with higher N-acetylation activity in bladder and colon tissue.</title>
        <authorList>
            <person name="Bell D.A."/>
            <person name="Badawi A.F."/>
            <person name="Lang N.P."/>
            <person name="Ilett K.F."/>
            <person name="Kadlubar F.F."/>
            <person name="Hirvonen A."/>
        </authorList>
    </citation>
    <scope>ALLELE NAT1*10</scope>
</reference>
<reference key="19">
    <citation type="journal article" date="1998" name="Pharmacogenetics">
        <title>Identification and characterization of variant alleles of human acetyltransferase NAT1 with defective function using p-aminosalicylate as an in-vivo and in-vitro probe.</title>
        <authorList>
            <person name="Hughes N.C."/>
            <person name="Janezic S.A."/>
            <person name="McQueen K.L."/>
            <person name="Jewett M.A."/>
            <person name="Castranio T."/>
            <person name="Bell D.A."/>
            <person name="Grant D.M."/>
        </authorList>
    </citation>
    <scope>VARIANT GLN-187</scope>
</reference>
<reference key="20">
    <citation type="journal article" date="1998" name="Pharmacogenetics">
        <title>Variants of N-acetyltransferase NAT1 and a case-control study of colorectal adenomas.</title>
        <authorList>
            <person name="Lin H.J."/>
            <person name="Probst-Hensch N.M."/>
            <person name="Hughes N.C."/>
            <person name="Sakamoto G.T."/>
            <person name="Louie A.D."/>
            <person name="Kau I.H."/>
            <person name="Lin B.K."/>
            <person name="Lee D.B."/>
            <person name="Lin J."/>
            <person name="Frankl H.D."/>
            <person name="Lee E.R."/>
            <person name="Hardy S."/>
            <person name="Grant D.M."/>
            <person name="Haile R.W."/>
        </authorList>
    </citation>
    <scope>VARIANTS NAT1*17; NAT1*21; NAT1*22; NAT1*24 AND NAT1*25</scope>
</reference>
<protein>
    <recommendedName>
        <fullName>Arylamine N-acetyltransferase 1</fullName>
        <ecNumber>2.3.1.5</ecNumber>
    </recommendedName>
    <alternativeName>
        <fullName>Arylamide acetylase 1</fullName>
    </alternativeName>
    <alternativeName>
        <fullName>Monomorphic arylamine N-acetyltransferase</fullName>
        <shortName>MNAT</shortName>
    </alternativeName>
    <alternativeName>
        <fullName>N-acetyltransferase type 1</fullName>
        <shortName>NAT-1</shortName>
    </alternativeName>
</protein>
<name>ARY1_HUMAN</name>
<gene>
    <name type="primary">NAT1</name>
    <name type="synonym">AAC1</name>
</gene>
<evidence type="ECO:0000250" key="1"/>
<evidence type="ECO:0000269" key="2">
    <source>
    </source>
</evidence>
<evidence type="ECO:0000269" key="3">
    <source>
    </source>
</evidence>
<evidence type="ECO:0000269" key="4">
    <source>
    </source>
</evidence>
<evidence type="ECO:0000269" key="5">
    <source>
    </source>
</evidence>
<evidence type="ECO:0000269" key="6">
    <source>
    </source>
</evidence>
<evidence type="ECO:0000269" key="7">
    <source>
    </source>
</evidence>
<evidence type="ECO:0000269" key="8">
    <source>
    </source>
</evidence>
<evidence type="ECO:0000269" key="9">
    <source>
    </source>
</evidence>
<evidence type="ECO:0000269" key="10">
    <source ref="12"/>
</evidence>
<evidence type="ECO:0000269" key="11">
    <source ref="8"/>
</evidence>
<evidence type="ECO:0000305" key="12"/>
<evidence type="ECO:0007744" key="13">
    <source>
    </source>
</evidence>
<evidence type="ECO:0007829" key="14">
    <source>
        <dbReference type="PDB" id="2IJA"/>
    </source>
</evidence>
<evidence type="ECO:0007829" key="15">
    <source>
        <dbReference type="PDB" id="2PQT"/>
    </source>
</evidence>
<comment type="function">
    <text>Participates in the detoxification of a plethora of hydrazine and arylamine drugs. Catalyzes the N- or O-acetylation of various arylamine and heterocyclic amine substrates and is able to bioactivate several known carcinogens.</text>
</comment>
<comment type="catalytic activity">
    <reaction>
        <text>an arylamine + acetyl-CoA = an N-acetylarylamine + CoA</text>
        <dbReference type="Rhea" id="RHEA:16613"/>
        <dbReference type="ChEBI" id="CHEBI:13790"/>
        <dbReference type="ChEBI" id="CHEBI:50471"/>
        <dbReference type="ChEBI" id="CHEBI:57287"/>
        <dbReference type="ChEBI" id="CHEBI:57288"/>
        <dbReference type="EC" id="2.3.1.5"/>
    </reaction>
</comment>
<comment type="interaction">
    <interactant intactId="EBI-9515652">
        <id>P18440</id>
    </interactant>
    <interactant intactId="EBI-1035358">
        <id>P05362</id>
        <label>ICAM1</label>
    </interactant>
    <organismsDiffer>false</organismsDiffer>
    <experiments>2</experiments>
</comment>
<comment type="subcellular location">
    <subcellularLocation>
        <location>Cytoplasm</location>
    </subcellularLocation>
</comment>
<comment type="polymorphism">
    <text evidence="4">N-acetylation polymorphism is determined by a low or high NAT activity in liver and has been implicated in the action and toxicity of amine-containing drugs. Slow acetylation genotypes have been associated with significant lung cancer risk. Candidate risk factor for susceptibility to neural tube defects. The NAT1*10 allele has been associated with increased risk of colon and urinary bladder cancers and with higher levels of N-acetyltransferase activity and DNA adducts in aromatic amine tumor target organs such as colon and urinary bladder (PubMed:7585580).</text>
</comment>
<comment type="miscellaneous">
    <text>NAT1 was historically considered to be monomorphic in nature but reports of allelic variations at the NAT1 locus suggest that it is a polymorphically expressed enzyme.</text>
</comment>
<comment type="similarity">
    <text evidence="12">Belongs to the arylamine N-acetyltransferase family.</text>
</comment>
<comment type="caution">
    <text evidence="12">The allelic variation Ile-149 designated as NAT1*17 is part of the NAT1*11 allelic variation as reported by the nomenclature committee.</text>
</comment>
<comment type="online information" name="NAT">
    <link uri="https://nat.mbg.duth.gr/"/>
    <text>NAT alleles</text>
</comment>
<comment type="online information" name="Atlas of Genetics and Cytogenetics in Oncology and Haematology">
    <link uri="https://atlasgeneticsoncology.org/gene/41497/NAT1"/>
</comment>